<protein>
    <recommendedName>
        <fullName evidence="1">Translation initiation factor IF-1</fullName>
    </recommendedName>
</protein>
<accession>A0Q669</accession>
<dbReference type="EMBL" id="CP000439">
    <property type="protein sequence ID" value="ABK89734.1"/>
    <property type="molecule type" value="Genomic_DNA"/>
</dbReference>
<dbReference type="RefSeq" id="WP_003033733.1">
    <property type="nucleotide sequence ID" value="NZ_CP009633.1"/>
</dbReference>
<dbReference type="SMR" id="A0Q669"/>
<dbReference type="GeneID" id="75263668"/>
<dbReference type="KEGG" id="ftn:FTN_0846"/>
<dbReference type="KEGG" id="ftx:AW25_1173"/>
<dbReference type="BioCyc" id="FTUL401614:G1G75-882-MONOMER"/>
<dbReference type="Proteomes" id="UP000000762">
    <property type="component" value="Chromosome"/>
</dbReference>
<dbReference type="GO" id="GO:0005829">
    <property type="term" value="C:cytosol"/>
    <property type="evidence" value="ECO:0007669"/>
    <property type="project" value="TreeGrafter"/>
</dbReference>
<dbReference type="GO" id="GO:0043022">
    <property type="term" value="F:ribosome binding"/>
    <property type="evidence" value="ECO:0007669"/>
    <property type="project" value="UniProtKB-UniRule"/>
</dbReference>
<dbReference type="GO" id="GO:0019843">
    <property type="term" value="F:rRNA binding"/>
    <property type="evidence" value="ECO:0007669"/>
    <property type="project" value="UniProtKB-UniRule"/>
</dbReference>
<dbReference type="GO" id="GO:0003743">
    <property type="term" value="F:translation initiation factor activity"/>
    <property type="evidence" value="ECO:0007669"/>
    <property type="project" value="UniProtKB-UniRule"/>
</dbReference>
<dbReference type="CDD" id="cd04451">
    <property type="entry name" value="S1_IF1"/>
    <property type="match status" value="1"/>
</dbReference>
<dbReference type="FunFam" id="2.40.50.140:FF:000002">
    <property type="entry name" value="Translation initiation factor IF-1"/>
    <property type="match status" value="1"/>
</dbReference>
<dbReference type="Gene3D" id="2.40.50.140">
    <property type="entry name" value="Nucleic acid-binding proteins"/>
    <property type="match status" value="1"/>
</dbReference>
<dbReference type="HAMAP" id="MF_00075">
    <property type="entry name" value="IF_1"/>
    <property type="match status" value="1"/>
</dbReference>
<dbReference type="InterPro" id="IPR012340">
    <property type="entry name" value="NA-bd_OB-fold"/>
</dbReference>
<dbReference type="InterPro" id="IPR006196">
    <property type="entry name" value="RNA-binding_domain_S1_IF1"/>
</dbReference>
<dbReference type="InterPro" id="IPR003029">
    <property type="entry name" value="S1_domain"/>
</dbReference>
<dbReference type="InterPro" id="IPR004368">
    <property type="entry name" value="TIF_IF1"/>
</dbReference>
<dbReference type="NCBIfam" id="TIGR00008">
    <property type="entry name" value="infA"/>
    <property type="match status" value="1"/>
</dbReference>
<dbReference type="PANTHER" id="PTHR33370">
    <property type="entry name" value="TRANSLATION INITIATION FACTOR IF-1, CHLOROPLASTIC"/>
    <property type="match status" value="1"/>
</dbReference>
<dbReference type="PANTHER" id="PTHR33370:SF1">
    <property type="entry name" value="TRANSLATION INITIATION FACTOR IF-1, CHLOROPLASTIC"/>
    <property type="match status" value="1"/>
</dbReference>
<dbReference type="Pfam" id="PF01176">
    <property type="entry name" value="eIF-1a"/>
    <property type="match status" value="1"/>
</dbReference>
<dbReference type="SMART" id="SM00316">
    <property type="entry name" value="S1"/>
    <property type="match status" value="1"/>
</dbReference>
<dbReference type="SUPFAM" id="SSF50249">
    <property type="entry name" value="Nucleic acid-binding proteins"/>
    <property type="match status" value="1"/>
</dbReference>
<dbReference type="PROSITE" id="PS50832">
    <property type="entry name" value="S1_IF1_TYPE"/>
    <property type="match status" value="1"/>
</dbReference>
<name>IF1_FRATN</name>
<evidence type="ECO:0000255" key="1">
    <source>
        <dbReference type="HAMAP-Rule" id="MF_00075"/>
    </source>
</evidence>
<gene>
    <name evidence="1" type="primary">infA</name>
    <name type="ordered locus">FTN_0846</name>
</gene>
<comment type="function">
    <text evidence="1">One of the essential components for the initiation of protein synthesis. Stabilizes the binding of IF-2 and IF-3 on the 30S subunit to which N-formylmethionyl-tRNA(fMet) subsequently binds. Helps modulate mRNA selection, yielding the 30S pre-initiation complex (PIC). Upon addition of the 50S ribosomal subunit IF-1, IF-2 and IF-3 are released leaving the mature 70S translation initiation complex.</text>
</comment>
<comment type="subunit">
    <text evidence="1">Component of the 30S ribosomal translation pre-initiation complex which assembles on the 30S ribosome in the order IF-2 and IF-3, IF-1 and N-formylmethionyl-tRNA(fMet); mRNA recruitment can occur at any time during PIC assembly.</text>
</comment>
<comment type="subcellular location">
    <subcellularLocation>
        <location evidence="1">Cytoplasm</location>
    </subcellularLocation>
</comment>
<comment type="similarity">
    <text evidence="1">Belongs to the IF-1 family.</text>
</comment>
<organism>
    <name type="scientific">Francisella tularensis subsp. novicida (strain U112)</name>
    <dbReference type="NCBI Taxonomy" id="401614"/>
    <lineage>
        <taxon>Bacteria</taxon>
        <taxon>Pseudomonadati</taxon>
        <taxon>Pseudomonadota</taxon>
        <taxon>Gammaproteobacteria</taxon>
        <taxon>Thiotrichales</taxon>
        <taxon>Francisellaceae</taxon>
        <taxon>Francisella</taxon>
    </lineage>
</organism>
<feature type="chain" id="PRO_0000338828" description="Translation initiation factor IF-1">
    <location>
        <begin position="1"/>
        <end position="72"/>
    </location>
</feature>
<feature type="domain" description="S1-like" evidence="1">
    <location>
        <begin position="1"/>
        <end position="72"/>
    </location>
</feature>
<keyword id="KW-0963">Cytoplasm</keyword>
<keyword id="KW-0396">Initiation factor</keyword>
<keyword id="KW-0648">Protein biosynthesis</keyword>
<keyword id="KW-0694">RNA-binding</keyword>
<keyword id="KW-0699">rRNA-binding</keyword>
<sequence>MAKEDCIEMEGVVLEALPNTMFRVELENGHIVTAHISGKMRKNYIRILTGDKVVVEITPYDLTKGRIKFRSK</sequence>
<proteinExistence type="inferred from homology"/>
<reference key="1">
    <citation type="journal article" date="2007" name="Genome Biol.">
        <title>Comparison of Francisella tularensis genomes reveals evolutionary events associated with the emergence of human pathogenic strains.</title>
        <authorList>
            <person name="Rohmer L."/>
            <person name="Fong C."/>
            <person name="Abmayr S."/>
            <person name="Wasnick M."/>
            <person name="Larson Freeman T.J."/>
            <person name="Radey M."/>
            <person name="Guina T."/>
            <person name="Svensson K."/>
            <person name="Hayden H.S."/>
            <person name="Jacobs M."/>
            <person name="Gallagher L.A."/>
            <person name="Manoil C."/>
            <person name="Ernst R.K."/>
            <person name="Drees B."/>
            <person name="Buckley D."/>
            <person name="Haugen E."/>
            <person name="Bovee D."/>
            <person name="Zhou Y."/>
            <person name="Chang J."/>
            <person name="Levy R."/>
            <person name="Lim R."/>
            <person name="Gillett W."/>
            <person name="Guenthener D."/>
            <person name="Kang A."/>
            <person name="Shaffer S.A."/>
            <person name="Taylor G."/>
            <person name="Chen J."/>
            <person name="Gallis B."/>
            <person name="D'Argenio D.A."/>
            <person name="Forsman M."/>
            <person name="Olson M.V."/>
            <person name="Goodlett D.R."/>
            <person name="Kaul R."/>
            <person name="Miller S.I."/>
            <person name="Brittnacher M.J."/>
        </authorList>
    </citation>
    <scope>NUCLEOTIDE SEQUENCE [LARGE SCALE GENOMIC DNA]</scope>
    <source>
        <strain>U112</strain>
    </source>
</reference>